<gene>
    <name evidence="4" type="primary">nscC</name>
    <name type="ORF">AFUA_7G00150</name>
</gene>
<name>NSCC_ASPFU</name>
<organism>
    <name type="scientific">Aspergillus fumigatus (strain ATCC MYA-4609 / CBS 101355 / FGSC A1100 / Af293)</name>
    <name type="common">Neosartorya fumigata</name>
    <dbReference type="NCBI Taxonomy" id="330879"/>
    <lineage>
        <taxon>Eukaryota</taxon>
        <taxon>Fungi</taxon>
        <taxon>Dikarya</taxon>
        <taxon>Ascomycota</taxon>
        <taxon>Pezizomycotina</taxon>
        <taxon>Eurotiomycetes</taxon>
        <taxon>Eurotiomycetidae</taxon>
        <taxon>Eurotiales</taxon>
        <taxon>Aspergillaceae</taxon>
        <taxon>Aspergillus</taxon>
        <taxon>Aspergillus subgen. Fumigati</taxon>
    </lineage>
</organism>
<dbReference type="EC" id="1.-.-.-" evidence="6"/>
<dbReference type="EMBL" id="AAHF01000015">
    <property type="protein sequence ID" value="EAL84876.1"/>
    <property type="molecule type" value="Genomic_DNA"/>
</dbReference>
<dbReference type="RefSeq" id="XP_746914.1">
    <property type="nucleotide sequence ID" value="XM_741821.1"/>
</dbReference>
<dbReference type="SMR" id="Q4WA60"/>
<dbReference type="STRING" id="330879.Q4WA60"/>
<dbReference type="GlyCosmos" id="Q4WA60">
    <property type="glycosylation" value="4 sites, No reported glycans"/>
</dbReference>
<dbReference type="EnsemblFungi" id="EAL84876">
    <property type="protein sequence ID" value="EAL84876"/>
    <property type="gene ID" value="AFUA_7G00150"/>
</dbReference>
<dbReference type="GeneID" id="3504089"/>
<dbReference type="KEGG" id="afm:AFUA_7G00150"/>
<dbReference type="VEuPathDB" id="FungiDB:Afu7g00150"/>
<dbReference type="eggNOG" id="KOG2614">
    <property type="taxonomic scope" value="Eukaryota"/>
</dbReference>
<dbReference type="HOGENOM" id="CLU_040697_0_0_1"/>
<dbReference type="InParanoid" id="Q4WA60"/>
<dbReference type="OMA" id="IPLIHYH"/>
<dbReference type="OrthoDB" id="47494at2759"/>
<dbReference type="Proteomes" id="UP000002530">
    <property type="component" value="Chromosome 7"/>
</dbReference>
<dbReference type="GO" id="GO:0071949">
    <property type="term" value="F:FAD binding"/>
    <property type="evidence" value="ECO:0007669"/>
    <property type="project" value="InterPro"/>
</dbReference>
<dbReference type="GO" id="GO:0004497">
    <property type="term" value="F:monooxygenase activity"/>
    <property type="evidence" value="ECO:0007669"/>
    <property type="project" value="UniProtKB-KW"/>
</dbReference>
<dbReference type="GO" id="GO:0044550">
    <property type="term" value="P:secondary metabolite biosynthetic process"/>
    <property type="evidence" value="ECO:0000318"/>
    <property type="project" value="GO_Central"/>
</dbReference>
<dbReference type="FunFam" id="3.50.50.60:FF:000429">
    <property type="entry name" value="FAD-dependent monooxygenase nscC"/>
    <property type="match status" value="1"/>
</dbReference>
<dbReference type="Gene3D" id="3.50.50.60">
    <property type="entry name" value="FAD/NAD(P)-binding domain"/>
    <property type="match status" value="1"/>
</dbReference>
<dbReference type="InterPro" id="IPR002938">
    <property type="entry name" value="FAD-bd"/>
</dbReference>
<dbReference type="InterPro" id="IPR036188">
    <property type="entry name" value="FAD/NAD-bd_sf"/>
</dbReference>
<dbReference type="PANTHER" id="PTHR47178:SF4">
    <property type="entry name" value="FAD-DEPENDENT MONOOXYGENASE APTC"/>
    <property type="match status" value="1"/>
</dbReference>
<dbReference type="PANTHER" id="PTHR47178">
    <property type="entry name" value="MONOOXYGENASE, FAD-BINDING"/>
    <property type="match status" value="1"/>
</dbReference>
<dbReference type="Pfam" id="PF01494">
    <property type="entry name" value="FAD_binding_3"/>
    <property type="match status" value="1"/>
</dbReference>
<dbReference type="PRINTS" id="PR00420">
    <property type="entry name" value="RNGMNOXGNASE"/>
</dbReference>
<dbReference type="SUPFAM" id="SSF51905">
    <property type="entry name" value="FAD/NAD(P)-binding domain"/>
    <property type="match status" value="1"/>
</dbReference>
<feature type="signal peptide" evidence="2">
    <location>
        <begin position="1"/>
        <end position="20"/>
    </location>
</feature>
<feature type="chain" id="PRO_0000437905" description="FAD-dependent monooxygenase nscC">
    <location>
        <begin position="21"/>
        <end position="408"/>
    </location>
</feature>
<feature type="binding site" evidence="1">
    <location>
        <position position="34"/>
    </location>
    <ligand>
        <name>FAD</name>
        <dbReference type="ChEBI" id="CHEBI:57692"/>
    </ligand>
</feature>
<feature type="binding site" evidence="1">
    <location>
        <position position="45"/>
    </location>
    <ligand>
        <name>FAD</name>
        <dbReference type="ChEBI" id="CHEBI:57692"/>
    </ligand>
</feature>
<feature type="binding site" evidence="1">
    <location>
        <position position="119"/>
    </location>
    <ligand>
        <name>FAD</name>
        <dbReference type="ChEBI" id="CHEBI:57692"/>
    </ligand>
</feature>
<feature type="binding site" evidence="1">
    <location>
        <position position="328"/>
    </location>
    <ligand>
        <name>FAD</name>
        <dbReference type="ChEBI" id="CHEBI:57692"/>
    </ligand>
</feature>
<feature type="binding site" evidence="1">
    <location>
        <position position="341"/>
    </location>
    <ligand>
        <name>FAD</name>
        <dbReference type="ChEBI" id="CHEBI:57692"/>
    </ligand>
</feature>
<feature type="glycosylation site" description="N-linked (GlcNAc...) asparagine" evidence="3">
    <location>
        <position position="91"/>
    </location>
</feature>
<feature type="glycosylation site" description="N-linked (GlcNAc...) asparagine" evidence="3">
    <location>
        <position position="103"/>
    </location>
</feature>
<feature type="glycosylation site" description="N-linked (GlcNAc...) asparagine" evidence="3">
    <location>
        <position position="170"/>
    </location>
</feature>
<feature type="glycosylation site" description="N-linked (GlcNAc...) asparagine" evidence="3">
    <location>
        <position position="231"/>
    </location>
</feature>
<sequence>MASRLPILIIGAGISGLTTARLLTNSGIPNIVFEASSPDRRQGFAISLREWGYTILLSALGDLPLRSLTRGVAPDREIGGSGWIDQAVWDNGTAKKLFVPDANSSTKELIVRANRNALRRWIADCGEEELDVRYGHRLKRVEGSLGDVRVEFENGAFYRGLMVVAADGVNSTVRSQVLAHVQPETVPAVLYHGEFQLPRADFDRLFRPHTGESNILAGVGDGFNTPFAVCNMTKTHVHMDWSYSRPVRGSGEDDPLYRPNLASEEAKRIPTALVEELASRDLAEPWSLFLNGEAIQHHRVFHWAVRCVSVTREDMQRAVGRGVAFVGDSWHAMPIFGGEGGNHALADGIELAGAIAAGATGDLGTAIGNYYDQAWKRSQDAVRRSKQRFYTLHRPMAEWRELSKKKPL</sequence>
<evidence type="ECO:0000250" key="1">
    <source>
        <dbReference type="UniProtKB" id="B8M9J8"/>
    </source>
</evidence>
<evidence type="ECO:0000255" key="2"/>
<evidence type="ECO:0000255" key="3">
    <source>
        <dbReference type="PROSITE-ProRule" id="PRU00498"/>
    </source>
</evidence>
<evidence type="ECO:0000303" key="4">
    <source>
    </source>
</evidence>
<evidence type="ECO:0000305" key="5"/>
<evidence type="ECO:0000305" key="6">
    <source>
    </source>
</evidence>
<evidence type="ECO:0000305" key="7">
    <source>
    </source>
</evidence>
<reference key="1">
    <citation type="journal article" date="2005" name="Nature">
        <title>Genomic sequence of the pathogenic and allergenic filamentous fungus Aspergillus fumigatus.</title>
        <authorList>
            <person name="Nierman W.C."/>
            <person name="Pain A."/>
            <person name="Anderson M.J."/>
            <person name="Wortman J.R."/>
            <person name="Kim H.S."/>
            <person name="Arroyo J."/>
            <person name="Berriman M."/>
            <person name="Abe K."/>
            <person name="Archer D.B."/>
            <person name="Bermejo C."/>
            <person name="Bennett J.W."/>
            <person name="Bowyer P."/>
            <person name="Chen D."/>
            <person name="Collins M."/>
            <person name="Coulsen R."/>
            <person name="Davies R."/>
            <person name="Dyer P.S."/>
            <person name="Farman M.L."/>
            <person name="Fedorova N."/>
            <person name="Fedorova N.D."/>
            <person name="Feldblyum T.V."/>
            <person name="Fischer R."/>
            <person name="Fosker N."/>
            <person name="Fraser A."/>
            <person name="Garcia J.L."/>
            <person name="Garcia M.J."/>
            <person name="Goble A."/>
            <person name="Goldman G.H."/>
            <person name="Gomi K."/>
            <person name="Griffith-Jones S."/>
            <person name="Gwilliam R."/>
            <person name="Haas B.J."/>
            <person name="Haas H."/>
            <person name="Harris D.E."/>
            <person name="Horiuchi H."/>
            <person name="Huang J."/>
            <person name="Humphray S."/>
            <person name="Jimenez J."/>
            <person name="Keller N."/>
            <person name="Khouri H."/>
            <person name="Kitamoto K."/>
            <person name="Kobayashi T."/>
            <person name="Konzack S."/>
            <person name="Kulkarni R."/>
            <person name="Kumagai T."/>
            <person name="Lafton A."/>
            <person name="Latge J.-P."/>
            <person name="Li W."/>
            <person name="Lord A."/>
            <person name="Lu C."/>
            <person name="Majoros W.H."/>
            <person name="May G.S."/>
            <person name="Miller B.L."/>
            <person name="Mohamoud Y."/>
            <person name="Molina M."/>
            <person name="Monod M."/>
            <person name="Mouyna I."/>
            <person name="Mulligan S."/>
            <person name="Murphy L.D."/>
            <person name="O'Neil S."/>
            <person name="Paulsen I."/>
            <person name="Penalva M.A."/>
            <person name="Pertea M."/>
            <person name="Price C."/>
            <person name="Pritchard B.L."/>
            <person name="Quail M.A."/>
            <person name="Rabbinowitsch E."/>
            <person name="Rawlins N."/>
            <person name="Rajandream M.A."/>
            <person name="Reichard U."/>
            <person name="Renauld H."/>
            <person name="Robson G.D."/>
            <person name="Rodriguez de Cordoba S."/>
            <person name="Rodriguez-Pena J.M."/>
            <person name="Ronning C.M."/>
            <person name="Rutter S."/>
            <person name="Salzberg S.L."/>
            <person name="Sanchez M."/>
            <person name="Sanchez-Ferrero J.C."/>
            <person name="Saunders D."/>
            <person name="Seeger K."/>
            <person name="Squares R."/>
            <person name="Squares S."/>
            <person name="Takeuchi M."/>
            <person name="Tekaia F."/>
            <person name="Turner G."/>
            <person name="Vazquez de Aldana C.R."/>
            <person name="Weidman J."/>
            <person name="White O."/>
            <person name="Woodward J.R."/>
            <person name="Yu J.-H."/>
            <person name="Fraser C.M."/>
            <person name="Galagan J.E."/>
            <person name="Asai K."/>
            <person name="Machida M."/>
            <person name="Hall N."/>
            <person name="Barrell B.G."/>
            <person name="Denning D.W."/>
        </authorList>
    </citation>
    <scope>NUCLEOTIDE SEQUENCE [LARGE SCALE GENOMIC DNA]</scope>
    <source>
        <strain>ATCC MYA-4609 / CBS 101355 / FGSC A1100 / Af293</strain>
    </source>
</reference>
<reference key="2">
    <citation type="journal article" date="2013" name="ACS Synth. Biol.">
        <title>Discovery of cryptic polyketide metabolites from dermatophytes using heterologous expression in Aspergillus nidulans.</title>
        <authorList>
            <person name="Yin W.B."/>
            <person name="Chooi Y.H."/>
            <person name="Smith A.R."/>
            <person name="Cacho R.A."/>
            <person name="Hu Y."/>
            <person name="White T.C."/>
            <person name="Tang Y."/>
        </authorList>
    </citation>
    <scope>FUNCTION</scope>
</reference>
<reference key="3">
    <citation type="journal article" date="2013" name="Org. Lett.">
        <title>Genome mining of a prenylated and immunosuppressive polyketide from pathogenic fungi.</title>
        <authorList>
            <person name="Chooi Y.H."/>
            <person name="Fang J."/>
            <person name="Liu H."/>
            <person name="Filler S.G."/>
            <person name="Wang P."/>
            <person name="Tang Y."/>
        </authorList>
    </citation>
    <scope>FUNCTION</scope>
</reference>
<proteinExistence type="inferred from homology"/>
<accession>Q4WA60</accession>
<comment type="function">
    <text evidence="6 7">FAD-dependent monooxygenase; part of the gene cluster that mediates the biosynthesis of neosartoricin, a prenylated anthracenone that exhibits T-cell antiproliferative activity, suggestive of a physiological role as an immunosuppressive agent (PubMed:23368997, PubMed:23758576). The non-reducing polyketide synthase nscA probably synthesizes and cyclizes the decaketide backbone (PubMed:23368997). The hydrolase nscB then mediates the product release through hydrolysis followed by spontaneous decarboxylation (PubMed:23368997). The prenyltransferase nscD catalyzes the addition of the dimethylallyl group to the aromatic C5 (PubMed:23368997). The FAD-dependent monooxygenase nscC is then responsible for the stereospecific hydroxylation at C2 (PubMed:23368997). There is no gene encoding O-acetyltransferase in the nsc gene cluster; thus, the last step of 2-O-acetylation leading to neosartoricin may be catalyzed by an unidentified O-acetyltransferase (PubMed:23368997).</text>
</comment>
<comment type="cofactor">
    <cofactor evidence="5">
        <name>FAD</name>
        <dbReference type="ChEBI" id="CHEBI:57692"/>
    </cofactor>
</comment>
<comment type="pathway">
    <text evidence="6">Secondary metabolite biosynthesis.</text>
</comment>
<comment type="similarity">
    <text evidence="5">Belongs to the paxM FAD-dependent monooxygenase family.</text>
</comment>
<keyword id="KW-0274">FAD</keyword>
<keyword id="KW-0285">Flavoprotein</keyword>
<keyword id="KW-0325">Glycoprotein</keyword>
<keyword id="KW-0503">Monooxygenase</keyword>
<keyword id="KW-0560">Oxidoreductase</keyword>
<keyword id="KW-1185">Reference proteome</keyword>
<keyword id="KW-0732">Signal</keyword>
<protein>
    <recommendedName>
        <fullName evidence="4">FAD-dependent monooxygenase nscC</fullName>
        <ecNumber evidence="6">1.-.-.-</ecNumber>
    </recommendedName>
    <alternativeName>
        <fullName evidence="4">Neosartoricin biosynthesis protein C</fullName>
    </alternativeName>
</protein>